<gene>
    <name evidence="1" type="primary">ubiA</name>
    <name type="ordered locus">XCC0390</name>
</gene>
<dbReference type="EC" id="2.5.1.39" evidence="1"/>
<dbReference type="EMBL" id="AE008922">
    <property type="protein sequence ID" value="AAM39709.1"/>
    <property type="molecule type" value="Genomic_DNA"/>
</dbReference>
<dbReference type="RefSeq" id="NP_635785.1">
    <property type="nucleotide sequence ID" value="NC_003902.1"/>
</dbReference>
<dbReference type="RefSeq" id="WP_011035644.1">
    <property type="nucleotide sequence ID" value="NC_003902.1"/>
</dbReference>
<dbReference type="SMR" id="Q8PDE8"/>
<dbReference type="STRING" id="190485.XCC0390"/>
<dbReference type="EnsemblBacteria" id="AAM39709">
    <property type="protein sequence ID" value="AAM39709"/>
    <property type="gene ID" value="XCC0390"/>
</dbReference>
<dbReference type="KEGG" id="xcc:XCC0390"/>
<dbReference type="PATRIC" id="fig|190485.4.peg.429"/>
<dbReference type="eggNOG" id="COG0382">
    <property type="taxonomic scope" value="Bacteria"/>
</dbReference>
<dbReference type="HOGENOM" id="CLU_034879_1_0_6"/>
<dbReference type="OrthoDB" id="9782418at2"/>
<dbReference type="UniPathway" id="UPA00232"/>
<dbReference type="Proteomes" id="UP000001010">
    <property type="component" value="Chromosome"/>
</dbReference>
<dbReference type="GO" id="GO:0005886">
    <property type="term" value="C:plasma membrane"/>
    <property type="evidence" value="ECO:0000318"/>
    <property type="project" value="GO_Central"/>
</dbReference>
<dbReference type="GO" id="GO:0008412">
    <property type="term" value="F:4-hydroxybenzoate polyprenyltransferase activity"/>
    <property type="evidence" value="ECO:0000318"/>
    <property type="project" value="GO_Central"/>
</dbReference>
<dbReference type="GO" id="GO:0006744">
    <property type="term" value="P:ubiquinone biosynthetic process"/>
    <property type="evidence" value="ECO:0000318"/>
    <property type="project" value="GO_Central"/>
</dbReference>
<dbReference type="CDD" id="cd13959">
    <property type="entry name" value="PT_UbiA_COQ2"/>
    <property type="match status" value="1"/>
</dbReference>
<dbReference type="FunFam" id="1.10.357.140:FF:000002">
    <property type="entry name" value="4-hydroxybenzoate octaprenyltransferase"/>
    <property type="match status" value="1"/>
</dbReference>
<dbReference type="FunFam" id="1.20.120.1780:FF:000001">
    <property type="entry name" value="4-hydroxybenzoate octaprenyltransferase"/>
    <property type="match status" value="1"/>
</dbReference>
<dbReference type="Gene3D" id="1.10.357.140">
    <property type="entry name" value="UbiA prenyltransferase"/>
    <property type="match status" value="1"/>
</dbReference>
<dbReference type="Gene3D" id="1.20.120.1780">
    <property type="entry name" value="UbiA prenyltransferase"/>
    <property type="match status" value="1"/>
</dbReference>
<dbReference type="HAMAP" id="MF_01635">
    <property type="entry name" value="UbiA"/>
    <property type="match status" value="1"/>
</dbReference>
<dbReference type="InterPro" id="IPR006370">
    <property type="entry name" value="HB_polyprenyltransferase-like"/>
</dbReference>
<dbReference type="InterPro" id="IPR039653">
    <property type="entry name" value="Prenyltransferase"/>
</dbReference>
<dbReference type="InterPro" id="IPR000537">
    <property type="entry name" value="UbiA_prenyltransferase"/>
</dbReference>
<dbReference type="InterPro" id="IPR030470">
    <property type="entry name" value="UbiA_prenylTrfase_CS"/>
</dbReference>
<dbReference type="InterPro" id="IPR044878">
    <property type="entry name" value="UbiA_sf"/>
</dbReference>
<dbReference type="NCBIfam" id="TIGR01474">
    <property type="entry name" value="ubiA_proteo"/>
    <property type="match status" value="1"/>
</dbReference>
<dbReference type="PANTHER" id="PTHR11048:SF28">
    <property type="entry name" value="4-HYDROXYBENZOATE POLYPRENYLTRANSFERASE, MITOCHONDRIAL"/>
    <property type="match status" value="1"/>
</dbReference>
<dbReference type="PANTHER" id="PTHR11048">
    <property type="entry name" value="PRENYLTRANSFERASES"/>
    <property type="match status" value="1"/>
</dbReference>
<dbReference type="Pfam" id="PF01040">
    <property type="entry name" value="UbiA"/>
    <property type="match status" value="1"/>
</dbReference>
<dbReference type="PROSITE" id="PS00943">
    <property type="entry name" value="UBIA"/>
    <property type="match status" value="1"/>
</dbReference>
<evidence type="ECO:0000255" key="1">
    <source>
        <dbReference type="HAMAP-Rule" id="MF_01635"/>
    </source>
</evidence>
<comment type="function">
    <text evidence="1">Catalyzes the prenylation of para-hydroxybenzoate (PHB) with an all-trans polyprenyl group. Mediates the second step in the final reaction sequence of ubiquinone-8 (UQ-8) biosynthesis, which is the condensation of the polyisoprenoid side chain with PHB, generating the first membrane-bound Q intermediate 3-octaprenyl-4-hydroxybenzoate.</text>
</comment>
<comment type="catalytic activity">
    <reaction evidence="1">
        <text>all-trans-octaprenyl diphosphate + 4-hydroxybenzoate = 4-hydroxy-3-(all-trans-octaprenyl)benzoate + diphosphate</text>
        <dbReference type="Rhea" id="RHEA:27782"/>
        <dbReference type="ChEBI" id="CHEBI:1617"/>
        <dbReference type="ChEBI" id="CHEBI:17879"/>
        <dbReference type="ChEBI" id="CHEBI:33019"/>
        <dbReference type="ChEBI" id="CHEBI:57711"/>
        <dbReference type="EC" id="2.5.1.39"/>
    </reaction>
</comment>
<comment type="cofactor">
    <cofactor evidence="1">
        <name>Mg(2+)</name>
        <dbReference type="ChEBI" id="CHEBI:18420"/>
    </cofactor>
</comment>
<comment type="pathway">
    <text evidence="1">Cofactor biosynthesis; ubiquinone biosynthesis.</text>
</comment>
<comment type="subcellular location">
    <subcellularLocation>
        <location evidence="1">Cell inner membrane</location>
        <topology evidence="1">Multi-pass membrane protein</topology>
    </subcellularLocation>
</comment>
<comment type="similarity">
    <text evidence="1">Belongs to the UbiA prenyltransferase family.</text>
</comment>
<name>UBIA_XANCP</name>
<reference key="1">
    <citation type="journal article" date="2002" name="Nature">
        <title>Comparison of the genomes of two Xanthomonas pathogens with differing host specificities.</title>
        <authorList>
            <person name="da Silva A.C.R."/>
            <person name="Ferro J.A."/>
            <person name="Reinach F.C."/>
            <person name="Farah C.S."/>
            <person name="Furlan L.R."/>
            <person name="Quaggio R.B."/>
            <person name="Monteiro-Vitorello C.B."/>
            <person name="Van Sluys M.A."/>
            <person name="Almeida N.F. Jr."/>
            <person name="Alves L.M.C."/>
            <person name="do Amaral A.M."/>
            <person name="Bertolini M.C."/>
            <person name="Camargo L.E.A."/>
            <person name="Camarotte G."/>
            <person name="Cannavan F."/>
            <person name="Cardozo J."/>
            <person name="Chambergo F."/>
            <person name="Ciapina L.P."/>
            <person name="Cicarelli R.M.B."/>
            <person name="Coutinho L.L."/>
            <person name="Cursino-Santos J.R."/>
            <person name="El-Dorry H."/>
            <person name="Faria J.B."/>
            <person name="Ferreira A.J.S."/>
            <person name="Ferreira R.C.C."/>
            <person name="Ferro M.I.T."/>
            <person name="Formighieri E.F."/>
            <person name="Franco M.C."/>
            <person name="Greggio C.C."/>
            <person name="Gruber A."/>
            <person name="Katsuyama A.M."/>
            <person name="Kishi L.T."/>
            <person name="Leite R.P."/>
            <person name="Lemos E.G.M."/>
            <person name="Lemos M.V.F."/>
            <person name="Locali E.C."/>
            <person name="Machado M.A."/>
            <person name="Madeira A.M.B.N."/>
            <person name="Martinez-Rossi N.M."/>
            <person name="Martins E.C."/>
            <person name="Meidanis J."/>
            <person name="Menck C.F.M."/>
            <person name="Miyaki C.Y."/>
            <person name="Moon D.H."/>
            <person name="Moreira L.M."/>
            <person name="Novo M.T.M."/>
            <person name="Okura V.K."/>
            <person name="Oliveira M.C."/>
            <person name="Oliveira V.R."/>
            <person name="Pereira H.A."/>
            <person name="Rossi A."/>
            <person name="Sena J.A.D."/>
            <person name="Silva C."/>
            <person name="de Souza R.F."/>
            <person name="Spinola L.A.F."/>
            <person name="Takita M.A."/>
            <person name="Tamura R.E."/>
            <person name="Teixeira E.C."/>
            <person name="Tezza R.I.D."/>
            <person name="Trindade dos Santos M."/>
            <person name="Truffi D."/>
            <person name="Tsai S.M."/>
            <person name="White F.F."/>
            <person name="Setubal J.C."/>
            <person name="Kitajima J.P."/>
        </authorList>
    </citation>
    <scope>NUCLEOTIDE SEQUENCE [LARGE SCALE GENOMIC DNA]</scope>
    <source>
        <strain>ATCC 33913 / DSM 3586 / NCPPB 528 / LMG 568 / P 25</strain>
    </source>
</reference>
<organism>
    <name type="scientific">Xanthomonas campestris pv. campestris (strain ATCC 33913 / DSM 3586 / NCPPB 528 / LMG 568 / P 25)</name>
    <dbReference type="NCBI Taxonomy" id="190485"/>
    <lineage>
        <taxon>Bacteria</taxon>
        <taxon>Pseudomonadati</taxon>
        <taxon>Pseudomonadota</taxon>
        <taxon>Gammaproteobacteria</taxon>
        <taxon>Lysobacterales</taxon>
        <taxon>Lysobacteraceae</taxon>
        <taxon>Xanthomonas</taxon>
    </lineage>
</organism>
<protein>
    <recommendedName>
        <fullName evidence="1">4-hydroxybenzoate octaprenyltransferase</fullName>
        <ecNumber evidence="1">2.5.1.39</ecNumber>
    </recommendedName>
    <alternativeName>
        <fullName evidence="1">4-HB polyprenyltransferase</fullName>
    </alternativeName>
</protein>
<feature type="chain" id="PRO_0000262855" description="4-hydroxybenzoate octaprenyltransferase">
    <location>
        <begin position="1"/>
        <end position="301"/>
    </location>
</feature>
<feature type="transmembrane region" description="Helical" evidence="1">
    <location>
        <begin position="34"/>
        <end position="54"/>
    </location>
</feature>
<feature type="transmembrane region" description="Helical" evidence="1">
    <location>
        <begin position="57"/>
        <end position="77"/>
    </location>
</feature>
<feature type="transmembrane region" description="Helical" evidence="1">
    <location>
        <begin position="108"/>
        <end position="128"/>
    </location>
</feature>
<feature type="transmembrane region" description="Helical" evidence="1">
    <location>
        <begin position="163"/>
        <end position="183"/>
    </location>
</feature>
<feature type="transmembrane region" description="Helical" evidence="1">
    <location>
        <begin position="222"/>
        <end position="242"/>
    </location>
</feature>
<feature type="transmembrane region" description="Helical" evidence="1">
    <location>
        <begin position="248"/>
        <end position="268"/>
    </location>
</feature>
<feature type="transmembrane region" description="Helical" evidence="1">
    <location>
        <begin position="280"/>
        <end position="300"/>
    </location>
</feature>
<accession>Q8PDE8</accession>
<proteinExistence type="inferred from homology"/>
<sequence length="301" mass="33437">MSKQGFKNVPMAPALTWPERLGQYWKLVRGDRPIGSLLLLWPTWWALWLAAGGLPPLWTLFVFTAGVWLTRSAGCVINDYADRWLDPHVERTKSRPLATGAVSGREALWVFVVLMLVAFALVLSLNWLTVALSVPGLFLAASYPYLKRHTHLPQVYLGMAFGWGIPMGFAAVQGSVPLLAWLLYAANILWATAYDTWYAMVDREDDLRMGSKSTAILFGRYDLIAQGVLYALMFAALVLVGLRAGLSIAYWAGLGIAALLVAYEFHIARHRERGPCFRAFLHNNWVGLAIFVGIAASLALR</sequence>
<keyword id="KW-0997">Cell inner membrane</keyword>
<keyword id="KW-1003">Cell membrane</keyword>
<keyword id="KW-0460">Magnesium</keyword>
<keyword id="KW-0472">Membrane</keyword>
<keyword id="KW-1185">Reference proteome</keyword>
<keyword id="KW-0808">Transferase</keyword>
<keyword id="KW-0812">Transmembrane</keyword>
<keyword id="KW-1133">Transmembrane helix</keyword>
<keyword id="KW-0831">Ubiquinone biosynthesis</keyword>